<proteinExistence type="inferred from homology"/>
<comment type="subcellular location">
    <subcellularLocation>
        <location evidence="1">Cell inner membrane</location>
        <topology evidence="1">Multi-pass membrane protein</topology>
    </subcellularLocation>
</comment>
<comment type="similarity">
    <text evidence="1">Belongs to the UPF0299 family.</text>
</comment>
<organism>
    <name type="scientific">Pectobacterium carotovorum subsp. carotovorum (strain PC1)</name>
    <dbReference type="NCBI Taxonomy" id="561230"/>
    <lineage>
        <taxon>Bacteria</taxon>
        <taxon>Pseudomonadati</taxon>
        <taxon>Pseudomonadota</taxon>
        <taxon>Gammaproteobacteria</taxon>
        <taxon>Enterobacterales</taxon>
        <taxon>Pectobacteriaceae</taxon>
        <taxon>Pectobacterium</taxon>
    </lineage>
</organism>
<name>Y1498_PECCP</name>
<protein>
    <recommendedName>
        <fullName evidence="1">UPF0299 membrane protein PC1_1498</fullName>
    </recommendedName>
</protein>
<feature type="chain" id="PRO_1000213646" description="UPF0299 membrane protein PC1_1498">
    <location>
        <begin position="1"/>
        <end position="135"/>
    </location>
</feature>
<feature type="transmembrane region" description="Helical" evidence="1">
    <location>
        <begin position="5"/>
        <end position="25"/>
    </location>
</feature>
<feature type="transmembrane region" description="Helical" evidence="1">
    <location>
        <begin position="30"/>
        <end position="50"/>
    </location>
</feature>
<feature type="transmembrane region" description="Helical" evidence="1">
    <location>
        <begin position="63"/>
        <end position="83"/>
    </location>
</feature>
<feature type="transmembrane region" description="Helical" evidence="1">
    <location>
        <begin position="93"/>
        <end position="113"/>
    </location>
</feature>
<gene>
    <name type="ordered locus">PC1_1498</name>
</gene>
<accession>C6DDT0</accession>
<evidence type="ECO:0000255" key="1">
    <source>
        <dbReference type="HAMAP-Rule" id="MF_01144"/>
    </source>
</evidence>
<reference key="1">
    <citation type="submission" date="2009-07" db="EMBL/GenBank/DDBJ databases">
        <title>Complete sequence of Pectobacterium carotovorum subsp. carotovorum PC1.</title>
        <authorList>
            <consortium name="US DOE Joint Genome Institute"/>
            <person name="Lucas S."/>
            <person name="Copeland A."/>
            <person name="Lapidus A."/>
            <person name="Glavina del Rio T."/>
            <person name="Tice H."/>
            <person name="Bruce D."/>
            <person name="Goodwin L."/>
            <person name="Pitluck S."/>
            <person name="Munk A.C."/>
            <person name="Brettin T."/>
            <person name="Detter J.C."/>
            <person name="Han C."/>
            <person name="Tapia R."/>
            <person name="Larimer F."/>
            <person name="Land M."/>
            <person name="Hauser L."/>
            <person name="Kyrpides N."/>
            <person name="Mikhailova N."/>
            <person name="Balakrishnan V."/>
            <person name="Glasner J."/>
            <person name="Perna N.T."/>
        </authorList>
    </citation>
    <scope>NUCLEOTIDE SEQUENCE [LARGE SCALE GENOMIC DNA]</scope>
    <source>
        <strain>PC1</strain>
    </source>
</reference>
<dbReference type="EMBL" id="CP001657">
    <property type="protein sequence ID" value="ACT12542.1"/>
    <property type="molecule type" value="Genomic_DNA"/>
</dbReference>
<dbReference type="RefSeq" id="WP_015839768.1">
    <property type="nucleotide sequence ID" value="NC_012917.1"/>
</dbReference>
<dbReference type="SMR" id="C6DDT0"/>
<dbReference type="STRING" id="561230.PC1_1498"/>
<dbReference type="KEGG" id="pct:PC1_1498"/>
<dbReference type="eggNOG" id="COG1380">
    <property type="taxonomic scope" value="Bacteria"/>
</dbReference>
<dbReference type="HOGENOM" id="CLU_113736_1_1_6"/>
<dbReference type="OrthoDB" id="385012at2"/>
<dbReference type="Proteomes" id="UP000002736">
    <property type="component" value="Chromosome"/>
</dbReference>
<dbReference type="GO" id="GO:0005886">
    <property type="term" value="C:plasma membrane"/>
    <property type="evidence" value="ECO:0007669"/>
    <property type="project" value="UniProtKB-SubCell"/>
</dbReference>
<dbReference type="HAMAP" id="MF_01144">
    <property type="entry name" value="UPF0299"/>
    <property type="match status" value="1"/>
</dbReference>
<dbReference type="InterPro" id="IPR005538">
    <property type="entry name" value="LrgA/CidA"/>
</dbReference>
<dbReference type="InterPro" id="IPR022957">
    <property type="entry name" value="Uncharacterised_UPF0299"/>
</dbReference>
<dbReference type="NCBIfam" id="NF002494">
    <property type="entry name" value="PRK01821.1"/>
    <property type="match status" value="1"/>
</dbReference>
<dbReference type="PANTHER" id="PTHR33931">
    <property type="entry name" value="HOLIN-LIKE PROTEIN CIDA-RELATED"/>
    <property type="match status" value="1"/>
</dbReference>
<dbReference type="PANTHER" id="PTHR33931:SF5">
    <property type="entry name" value="UPF0299 MEMBRANE PROTEIN YOHJ"/>
    <property type="match status" value="1"/>
</dbReference>
<dbReference type="Pfam" id="PF03788">
    <property type="entry name" value="LrgA"/>
    <property type="match status" value="1"/>
</dbReference>
<keyword id="KW-0997">Cell inner membrane</keyword>
<keyword id="KW-1003">Cell membrane</keyword>
<keyword id="KW-0472">Membrane</keyword>
<keyword id="KW-0812">Transmembrane</keyword>
<keyword id="KW-1133">Transmembrane helix</keyword>
<sequence length="135" mass="14990">MRNTFIVCWQYLRAFALIYLCLLAGNAVSALLPFTIPGSIIGMLVLFTLLASQILPAQWVKPGCHLLIRHMALLFVPIGVGVMNYYDLVSQQFGPIVVSCLISTFIVMLVVGFSTQIMQRERAMAGDRTPPKDNE</sequence>